<accession>A5F3G1</accession>
<accession>C3LYC8</accession>
<sequence>MAKTIQAIRGMNDCLPTQSPLWQKVEGVVKNVISAYGYSEVRMPIVEMTHLFSRAIGEVTDVVEKEMYTFEDRNGDSLTLRPEGTAGCVRSGIENGLLYNQEQRLWYMGPMFRHERPQKGRYRQFHQCGVEVFGLDGPDVDAELIMMTARLWRELGIAQHVRLELNSIGSLEARANYRTALIDYLEQYQNVLDEDCKRRMYTNPLRVLDSKNPDVQAILGDAPQLSDYLDAESKQHFAGLCELLDAAGIEYTVNQRLVRGLDYYNRTVFEWITESLGSQGTVCGGGRYDGLVEQLGGKPTPAVGFAMGLERLVLMMETLGNTDVRRSVDVYMVTAGEGTMMAGMKLAEQLREQVPGLRVMTHFGGGNFKKQFKRADKVGAAIALVLGEDEVAAQTVVVKDLAGGEQNTVAQAEVAKLLAHLA</sequence>
<organism>
    <name type="scientific">Vibrio cholerae serotype O1 (strain ATCC 39541 / Classical Ogawa 395 / O395)</name>
    <dbReference type="NCBI Taxonomy" id="345073"/>
    <lineage>
        <taxon>Bacteria</taxon>
        <taxon>Pseudomonadati</taxon>
        <taxon>Pseudomonadota</taxon>
        <taxon>Gammaproteobacteria</taxon>
        <taxon>Vibrionales</taxon>
        <taxon>Vibrionaceae</taxon>
        <taxon>Vibrio</taxon>
    </lineage>
</organism>
<keyword id="KW-0030">Aminoacyl-tRNA synthetase</keyword>
<keyword id="KW-0067">ATP-binding</keyword>
<keyword id="KW-0963">Cytoplasm</keyword>
<keyword id="KW-0436">Ligase</keyword>
<keyword id="KW-0547">Nucleotide-binding</keyword>
<keyword id="KW-0648">Protein biosynthesis</keyword>
<comment type="catalytic activity">
    <reaction evidence="1">
        <text>tRNA(His) + L-histidine + ATP = L-histidyl-tRNA(His) + AMP + diphosphate + H(+)</text>
        <dbReference type="Rhea" id="RHEA:17313"/>
        <dbReference type="Rhea" id="RHEA-COMP:9665"/>
        <dbReference type="Rhea" id="RHEA-COMP:9689"/>
        <dbReference type="ChEBI" id="CHEBI:15378"/>
        <dbReference type="ChEBI" id="CHEBI:30616"/>
        <dbReference type="ChEBI" id="CHEBI:33019"/>
        <dbReference type="ChEBI" id="CHEBI:57595"/>
        <dbReference type="ChEBI" id="CHEBI:78442"/>
        <dbReference type="ChEBI" id="CHEBI:78527"/>
        <dbReference type="ChEBI" id="CHEBI:456215"/>
        <dbReference type="EC" id="6.1.1.21"/>
    </reaction>
</comment>
<comment type="subunit">
    <text evidence="1">Homodimer.</text>
</comment>
<comment type="subcellular location">
    <subcellularLocation>
        <location evidence="1">Cytoplasm</location>
    </subcellularLocation>
</comment>
<comment type="similarity">
    <text evidence="1">Belongs to the class-II aminoacyl-tRNA synthetase family.</text>
</comment>
<name>SYH_VIBC3</name>
<evidence type="ECO:0000255" key="1">
    <source>
        <dbReference type="HAMAP-Rule" id="MF_00127"/>
    </source>
</evidence>
<dbReference type="EC" id="6.1.1.21" evidence="1"/>
<dbReference type="EMBL" id="CP000627">
    <property type="protein sequence ID" value="ABQ20740.1"/>
    <property type="molecule type" value="Genomic_DNA"/>
</dbReference>
<dbReference type="EMBL" id="CP001235">
    <property type="protein sequence ID" value="ACP08794.1"/>
    <property type="molecule type" value="Genomic_DNA"/>
</dbReference>
<dbReference type="RefSeq" id="WP_001140461.1">
    <property type="nucleotide sequence ID" value="NZ_JAACZH010000017.1"/>
</dbReference>
<dbReference type="SMR" id="A5F3G1"/>
<dbReference type="GeneID" id="89515095"/>
<dbReference type="KEGG" id="vco:VC0395_A0289"/>
<dbReference type="KEGG" id="vcr:VC395_0777"/>
<dbReference type="PATRIC" id="fig|345073.21.peg.751"/>
<dbReference type="eggNOG" id="COG0124">
    <property type="taxonomic scope" value="Bacteria"/>
</dbReference>
<dbReference type="HOGENOM" id="CLU_025113_1_1_6"/>
<dbReference type="OrthoDB" id="9800814at2"/>
<dbReference type="Proteomes" id="UP000000249">
    <property type="component" value="Chromosome 2"/>
</dbReference>
<dbReference type="GO" id="GO:0005737">
    <property type="term" value="C:cytoplasm"/>
    <property type="evidence" value="ECO:0007669"/>
    <property type="project" value="UniProtKB-SubCell"/>
</dbReference>
<dbReference type="GO" id="GO:0005524">
    <property type="term" value="F:ATP binding"/>
    <property type="evidence" value="ECO:0007669"/>
    <property type="project" value="UniProtKB-UniRule"/>
</dbReference>
<dbReference type="GO" id="GO:0004821">
    <property type="term" value="F:histidine-tRNA ligase activity"/>
    <property type="evidence" value="ECO:0007669"/>
    <property type="project" value="UniProtKB-UniRule"/>
</dbReference>
<dbReference type="GO" id="GO:0006427">
    <property type="term" value="P:histidyl-tRNA aminoacylation"/>
    <property type="evidence" value="ECO:0007669"/>
    <property type="project" value="UniProtKB-UniRule"/>
</dbReference>
<dbReference type="CDD" id="cd00773">
    <property type="entry name" value="HisRS-like_core"/>
    <property type="match status" value="1"/>
</dbReference>
<dbReference type="CDD" id="cd00859">
    <property type="entry name" value="HisRS_anticodon"/>
    <property type="match status" value="1"/>
</dbReference>
<dbReference type="FunFam" id="3.30.930.10:FF:000005">
    <property type="entry name" value="Histidine--tRNA ligase"/>
    <property type="match status" value="1"/>
</dbReference>
<dbReference type="FunFam" id="3.40.50.800:FF:000007">
    <property type="entry name" value="Histidine--tRNA ligase"/>
    <property type="match status" value="1"/>
</dbReference>
<dbReference type="Gene3D" id="3.40.50.800">
    <property type="entry name" value="Anticodon-binding domain"/>
    <property type="match status" value="1"/>
</dbReference>
<dbReference type="Gene3D" id="3.30.930.10">
    <property type="entry name" value="Bira Bifunctional Protein, Domain 2"/>
    <property type="match status" value="1"/>
</dbReference>
<dbReference type="HAMAP" id="MF_00127">
    <property type="entry name" value="His_tRNA_synth"/>
    <property type="match status" value="1"/>
</dbReference>
<dbReference type="InterPro" id="IPR006195">
    <property type="entry name" value="aa-tRNA-synth_II"/>
</dbReference>
<dbReference type="InterPro" id="IPR045864">
    <property type="entry name" value="aa-tRNA-synth_II/BPL/LPL"/>
</dbReference>
<dbReference type="InterPro" id="IPR004154">
    <property type="entry name" value="Anticodon-bd"/>
</dbReference>
<dbReference type="InterPro" id="IPR036621">
    <property type="entry name" value="Anticodon-bd_dom_sf"/>
</dbReference>
<dbReference type="InterPro" id="IPR015807">
    <property type="entry name" value="His-tRNA-ligase"/>
</dbReference>
<dbReference type="InterPro" id="IPR041715">
    <property type="entry name" value="HisRS-like_core"/>
</dbReference>
<dbReference type="InterPro" id="IPR004516">
    <property type="entry name" value="HisRS/HisZ"/>
</dbReference>
<dbReference type="InterPro" id="IPR033656">
    <property type="entry name" value="HisRS_anticodon"/>
</dbReference>
<dbReference type="NCBIfam" id="TIGR00442">
    <property type="entry name" value="hisS"/>
    <property type="match status" value="1"/>
</dbReference>
<dbReference type="PANTHER" id="PTHR43707:SF1">
    <property type="entry name" value="HISTIDINE--TRNA LIGASE, MITOCHONDRIAL-RELATED"/>
    <property type="match status" value="1"/>
</dbReference>
<dbReference type="PANTHER" id="PTHR43707">
    <property type="entry name" value="HISTIDYL-TRNA SYNTHETASE"/>
    <property type="match status" value="1"/>
</dbReference>
<dbReference type="Pfam" id="PF03129">
    <property type="entry name" value="HGTP_anticodon"/>
    <property type="match status" value="1"/>
</dbReference>
<dbReference type="Pfam" id="PF13393">
    <property type="entry name" value="tRNA-synt_His"/>
    <property type="match status" value="1"/>
</dbReference>
<dbReference type="PIRSF" id="PIRSF001549">
    <property type="entry name" value="His-tRNA_synth"/>
    <property type="match status" value="1"/>
</dbReference>
<dbReference type="SUPFAM" id="SSF52954">
    <property type="entry name" value="Class II aaRS ABD-related"/>
    <property type="match status" value="1"/>
</dbReference>
<dbReference type="SUPFAM" id="SSF55681">
    <property type="entry name" value="Class II aaRS and biotin synthetases"/>
    <property type="match status" value="1"/>
</dbReference>
<dbReference type="PROSITE" id="PS50862">
    <property type="entry name" value="AA_TRNA_LIGASE_II"/>
    <property type="match status" value="1"/>
</dbReference>
<reference key="1">
    <citation type="submission" date="2007-03" db="EMBL/GenBank/DDBJ databases">
        <authorList>
            <person name="Heidelberg J."/>
        </authorList>
    </citation>
    <scope>NUCLEOTIDE SEQUENCE [LARGE SCALE GENOMIC DNA]</scope>
    <source>
        <strain>ATCC 39541 / Classical Ogawa 395 / O395</strain>
    </source>
</reference>
<reference key="2">
    <citation type="journal article" date="2008" name="PLoS ONE">
        <title>A recalibrated molecular clock and independent origins for the cholera pandemic clones.</title>
        <authorList>
            <person name="Feng L."/>
            <person name="Reeves P.R."/>
            <person name="Lan R."/>
            <person name="Ren Y."/>
            <person name="Gao C."/>
            <person name="Zhou Z."/>
            <person name="Ren Y."/>
            <person name="Cheng J."/>
            <person name="Wang W."/>
            <person name="Wang J."/>
            <person name="Qian W."/>
            <person name="Li D."/>
            <person name="Wang L."/>
        </authorList>
    </citation>
    <scope>NUCLEOTIDE SEQUENCE [LARGE SCALE GENOMIC DNA]</scope>
    <source>
        <strain>ATCC 39541 / Classical Ogawa 395 / O395</strain>
    </source>
</reference>
<proteinExistence type="inferred from homology"/>
<feature type="chain" id="PRO_1000071408" description="Histidine--tRNA ligase">
    <location>
        <begin position="1"/>
        <end position="422"/>
    </location>
</feature>
<gene>
    <name evidence="1" type="primary">hisS</name>
    <name type="ordered locus">VC0395_A0289</name>
    <name type="ordered locus">VC395_0777</name>
</gene>
<protein>
    <recommendedName>
        <fullName evidence="1">Histidine--tRNA ligase</fullName>
        <ecNumber evidence="1">6.1.1.21</ecNumber>
    </recommendedName>
    <alternativeName>
        <fullName evidence="1">Histidyl-tRNA synthetase</fullName>
        <shortName evidence="1">HisRS</shortName>
    </alternativeName>
</protein>